<reference key="1">
    <citation type="journal article" date="2005" name="Genome Res.">
        <title>Comparative and functional genomic analyses of the pathogenicity of phytopathogen Xanthomonas campestris pv. campestris.</title>
        <authorList>
            <person name="Qian W."/>
            <person name="Jia Y."/>
            <person name="Ren S.-X."/>
            <person name="He Y.-Q."/>
            <person name="Feng J.-X."/>
            <person name="Lu L.-F."/>
            <person name="Sun Q."/>
            <person name="Ying G."/>
            <person name="Tang D.-J."/>
            <person name="Tang H."/>
            <person name="Wu W."/>
            <person name="Hao P."/>
            <person name="Wang L."/>
            <person name="Jiang B.-L."/>
            <person name="Zeng S."/>
            <person name="Gu W.-Y."/>
            <person name="Lu G."/>
            <person name="Rong L."/>
            <person name="Tian Y."/>
            <person name="Yao Z."/>
            <person name="Fu G."/>
            <person name="Chen B."/>
            <person name="Fang R."/>
            <person name="Qiang B."/>
            <person name="Chen Z."/>
            <person name="Zhao G.-P."/>
            <person name="Tang J.-L."/>
            <person name="He C."/>
        </authorList>
    </citation>
    <scope>NUCLEOTIDE SEQUENCE [LARGE SCALE GENOMIC DNA]</scope>
    <source>
        <strain>8004</strain>
    </source>
</reference>
<name>LSPA_XANC8</name>
<accession>Q4US41</accession>
<gene>
    <name evidence="1" type="primary">lspA</name>
    <name type="ordered locus">XC_3086</name>
</gene>
<sequence>MSQRPNPSALIWLLLSAVVIGLDQWSKAWVLSSLPEYTPVPVIDGFWNWYRTYNTGAAFSFLSDAGGWQLWFFTALAVGISGLLAFWLSRTARGDWRSAVPYALVIGGAIGNVIDRLMHGHVVDFIQWYVGEHTWPSFNIADSAIVGGAIGIALFGLFDGKRSRKAG</sequence>
<protein>
    <recommendedName>
        <fullName evidence="1">Lipoprotein signal peptidase</fullName>
        <ecNumber evidence="1">3.4.23.36</ecNumber>
    </recommendedName>
    <alternativeName>
        <fullName evidence="1">Prolipoprotein signal peptidase</fullName>
    </alternativeName>
    <alternativeName>
        <fullName evidence="1">Signal peptidase II</fullName>
        <shortName evidence="1">SPase II</shortName>
    </alternativeName>
</protein>
<evidence type="ECO:0000255" key="1">
    <source>
        <dbReference type="HAMAP-Rule" id="MF_00161"/>
    </source>
</evidence>
<proteinExistence type="inferred from homology"/>
<dbReference type="EC" id="3.4.23.36" evidence="1"/>
<dbReference type="EMBL" id="CP000050">
    <property type="protein sequence ID" value="AAY50132.1"/>
    <property type="molecule type" value="Genomic_DNA"/>
</dbReference>
<dbReference type="RefSeq" id="WP_011036354.1">
    <property type="nucleotide sequence ID" value="NZ_CP155948.1"/>
</dbReference>
<dbReference type="SMR" id="Q4US41"/>
<dbReference type="GeneID" id="58014259"/>
<dbReference type="KEGG" id="xcb:XC_3086"/>
<dbReference type="HOGENOM" id="CLU_083252_4_0_6"/>
<dbReference type="UniPathway" id="UPA00665"/>
<dbReference type="Proteomes" id="UP000000420">
    <property type="component" value="Chromosome"/>
</dbReference>
<dbReference type="GO" id="GO:0005886">
    <property type="term" value="C:plasma membrane"/>
    <property type="evidence" value="ECO:0007669"/>
    <property type="project" value="UniProtKB-SubCell"/>
</dbReference>
<dbReference type="GO" id="GO:0004190">
    <property type="term" value="F:aspartic-type endopeptidase activity"/>
    <property type="evidence" value="ECO:0007669"/>
    <property type="project" value="UniProtKB-UniRule"/>
</dbReference>
<dbReference type="GO" id="GO:0006508">
    <property type="term" value="P:proteolysis"/>
    <property type="evidence" value="ECO:0007669"/>
    <property type="project" value="UniProtKB-KW"/>
</dbReference>
<dbReference type="HAMAP" id="MF_00161">
    <property type="entry name" value="LspA"/>
    <property type="match status" value="1"/>
</dbReference>
<dbReference type="InterPro" id="IPR001872">
    <property type="entry name" value="Peptidase_A8"/>
</dbReference>
<dbReference type="NCBIfam" id="TIGR00077">
    <property type="entry name" value="lspA"/>
    <property type="match status" value="1"/>
</dbReference>
<dbReference type="PANTHER" id="PTHR33695">
    <property type="entry name" value="LIPOPROTEIN SIGNAL PEPTIDASE"/>
    <property type="match status" value="1"/>
</dbReference>
<dbReference type="PANTHER" id="PTHR33695:SF1">
    <property type="entry name" value="LIPOPROTEIN SIGNAL PEPTIDASE"/>
    <property type="match status" value="1"/>
</dbReference>
<dbReference type="Pfam" id="PF01252">
    <property type="entry name" value="Peptidase_A8"/>
    <property type="match status" value="1"/>
</dbReference>
<dbReference type="PRINTS" id="PR00781">
    <property type="entry name" value="LIPOSIGPTASE"/>
</dbReference>
<dbReference type="PROSITE" id="PS00855">
    <property type="entry name" value="SPASE_II"/>
    <property type="match status" value="1"/>
</dbReference>
<comment type="function">
    <text evidence="1">This protein specifically catalyzes the removal of signal peptides from prolipoproteins.</text>
</comment>
<comment type="catalytic activity">
    <reaction evidence="1">
        <text>Release of signal peptides from bacterial membrane prolipoproteins. Hydrolyzes -Xaa-Yaa-Zaa-|-(S,diacylglyceryl)Cys-, in which Xaa is hydrophobic (preferably Leu), and Yaa (Ala or Ser) and Zaa (Gly or Ala) have small, neutral side chains.</text>
        <dbReference type="EC" id="3.4.23.36"/>
    </reaction>
</comment>
<comment type="pathway">
    <text evidence="1">Protein modification; lipoprotein biosynthesis (signal peptide cleavage).</text>
</comment>
<comment type="subcellular location">
    <subcellularLocation>
        <location evidence="1">Cell inner membrane</location>
        <topology evidence="1">Multi-pass membrane protein</topology>
    </subcellularLocation>
</comment>
<comment type="similarity">
    <text evidence="1">Belongs to the peptidase A8 family.</text>
</comment>
<feature type="chain" id="PRO_0000289460" description="Lipoprotein signal peptidase">
    <location>
        <begin position="1"/>
        <end position="167"/>
    </location>
</feature>
<feature type="transmembrane region" description="Helical" evidence="1">
    <location>
        <begin position="10"/>
        <end position="30"/>
    </location>
</feature>
<feature type="transmembrane region" description="Helical" evidence="1">
    <location>
        <begin position="68"/>
        <end position="88"/>
    </location>
</feature>
<feature type="transmembrane region" description="Helical" evidence="1">
    <location>
        <begin position="98"/>
        <end position="118"/>
    </location>
</feature>
<feature type="transmembrane region" description="Helical" evidence="1">
    <location>
        <begin position="138"/>
        <end position="158"/>
    </location>
</feature>
<feature type="active site" evidence="1">
    <location>
        <position position="124"/>
    </location>
</feature>
<feature type="active site" evidence="1">
    <location>
        <position position="142"/>
    </location>
</feature>
<keyword id="KW-0064">Aspartyl protease</keyword>
<keyword id="KW-0997">Cell inner membrane</keyword>
<keyword id="KW-1003">Cell membrane</keyword>
<keyword id="KW-0378">Hydrolase</keyword>
<keyword id="KW-0472">Membrane</keyword>
<keyword id="KW-0645">Protease</keyword>
<keyword id="KW-0812">Transmembrane</keyword>
<keyword id="KW-1133">Transmembrane helix</keyword>
<organism>
    <name type="scientific">Xanthomonas campestris pv. campestris (strain 8004)</name>
    <dbReference type="NCBI Taxonomy" id="314565"/>
    <lineage>
        <taxon>Bacteria</taxon>
        <taxon>Pseudomonadati</taxon>
        <taxon>Pseudomonadota</taxon>
        <taxon>Gammaproteobacteria</taxon>
        <taxon>Lysobacterales</taxon>
        <taxon>Lysobacteraceae</taxon>
        <taxon>Xanthomonas</taxon>
    </lineage>
</organism>